<keyword id="KW-1185">Reference proteome</keyword>
<keyword id="KW-0804">Transcription</keyword>
<keyword id="KW-0805">Transcription regulation</keyword>
<dbReference type="EMBL" id="U85262">
    <property type="protein sequence ID" value="AAB99523.1"/>
    <property type="molecule type" value="Genomic_DNA"/>
</dbReference>
<dbReference type="EMBL" id="AE006641">
    <property type="protein sequence ID" value="AAK40676.1"/>
    <property type="status" value="ALT_INIT"/>
    <property type="molecule type" value="Genomic_DNA"/>
</dbReference>
<dbReference type="PIR" id="E90177">
    <property type="entry name" value="E90177"/>
</dbReference>
<dbReference type="RefSeq" id="WP_009990638.1">
    <property type="nucleotide sequence ID" value="NC_002754.1"/>
</dbReference>
<dbReference type="SMR" id="P96036"/>
<dbReference type="STRING" id="273057.SSO0347"/>
<dbReference type="PaxDb" id="273057-SSO0347"/>
<dbReference type="EnsemblBacteria" id="AAK40676">
    <property type="protein sequence ID" value="AAK40676"/>
    <property type="gene ID" value="SSO0347"/>
</dbReference>
<dbReference type="KEGG" id="sso:SSO0347"/>
<dbReference type="PATRIC" id="fig|273057.12.peg.337"/>
<dbReference type="eggNOG" id="arCOG01920">
    <property type="taxonomic scope" value="Archaea"/>
</dbReference>
<dbReference type="HOGENOM" id="CLU_113589_0_0_2"/>
<dbReference type="InParanoid" id="P96036"/>
<dbReference type="PhylomeDB" id="P96036"/>
<dbReference type="Proteomes" id="UP000001974">
    <property type="component" value="Chromosome"/>
</dbReference>
<dbReference type="GO" id="GO:0005840">
    <property type="term" value="C:ribosome"/>
    <property type="evidence" value="ECO:0007669"/>
    <property type="project" value="InterPro"/>
</dbReference>
<dbReference type="GO" id="GO:0003735">
    <property type="term" value="F:structural constituent of ribosome"/>
    <property type="evidence" value="ECO:0007669"/>
    <property type="project" value="InterPro"/>
</dbReference>
<dbReference type="GO" id="GO:0003746">
    <property type="term" value="F:translation elongation factor activity"/>
    <property type="evidence" value="ECO:0007669"/>
    <property type="project" value="InterPro"/>
</dbReference>
<dbReference type="GO" id="GO:0006355">
    <property type="term" value="P:regulation of DNA-templated transcription"/>
    <property type="evidence" value="ECO:0007669"/>
    <property type="project" value="UniProtKB-UniRule"/>
</dbReference>
<dbReference type="GO" id="GO:0140673">
    <property type="term" value="P:transcription elongation-coupled chromatin remodeling"/>
    <property type="evidence" value="ECO:0007669"/>
    <property type="project" value="InterPro"/>
</dbReference>
<dbReference type="CDD" id="cd06091">
    <property type="entry name" value="KOW_NusG"/>
    <property type="match status" value="1"/>
</dbReference>
<dbReference type="CDD" id="cd09887">
    <property type="entry name" value="NGN_Arch"/>
    <property type="match status" value="1"/>
</dbReference>
<dbReference type="Gene3D" id="2.30.30.30">
    <property type="match status" value="1"/>
</dbReference>
<dbReference type="Gene3D" id="3.30.70.940">
    <property type="entry name" value="NusG, N-terminal domain"/>
    <property type="match status" value="1"/>
</dbReference>
<dbReference type="HAMAP" id="MF_00950">
    <property type="entry name" value="Spt5_arch"/>
    <property type="match status" value="1"/>
</dbReference>
<dbReference type="InterPro" id="IPR005824">
    <property type="entry name" value="KOW"/>
</dbReference>
<dbReference type="InterPro" id="IPR005100">
    <property type="entry name" value="NGN-domain"/>
</dbReference>
<dbReference type="InterPro" id="IPR006645">
    <property type="entry name" value="NGN-like_dom"/>
</dbReference>
<dbReference type="InterPro" id="IPR036735">
    <property type="entry name" value="NGN_dom_sf"/>
</dbReference>
<dbReference type="InterPro" id="IPR014722">
    <property type="entry name" value="Rib_uL2_dom2"/>
</dbReference>
<dbReference type="InterPro" id="IPR005825">
    <property type="entry name" value="Ribosomal_uL24_CS"/>
</dbReference>
<dbReference type="InterPro" id="IPR011590">
    <property type="entry name" value="Spt5_arc"/>
</dbReference>
<dbReference type="InterPro" id="IPR008991">
    <property type="entry name" value="Translation_prot_SH3-like_sf"/>
</dbReference>
<dbReference type="NCBIfam" id="TIGR00405">
    <property type="entry name" value="KOW_elon_Spt5"/>
    <property type="match status" value="1"/>
</dbReference>
<dbReference type="Pfam" id="PF00467">
    <property type="entry name" value="KOW"/>
    <property type="match status" value="1"/>
</dbReference>
<dbReference type="Pfam" id="PF03439">
    <property type="entry name" value="Spt5-NGN"/>
    <property type="match status" value="1"/>
</dbReference>
<dbReference type="SMART" id="SM00739">
    <property type="entry name" value="KOW"/>
    <property type="match status" value="1"/>
</dbReference>
<dbReference type="SMART" id="SM00738">
    <property type="entry name" value="NGN"/>
    <property type="match status" value="1"/>
</dbReference>
<dbReference type="SUPFAM" id="SSF50104">
    <property type="entry name" value="Translation proteins SH3-like domain"/>
    <property type="match status" value="1"/>
</dbReference>
<reference key="1">
    <citation type="journal article" date="1997" name="Biochim. Biophys. Acta">
        <title>Nucleotide sequence of a gene cluster encoding NusG and the L11-L1-L10-L12 ribosomal proteins from the thermophilic archaeon Sulfolobus solfataricus.</title>
        <authorList>
            <person name="Geiger M."/>
            <person name="Groebner P."/>
            <person name="Piendl W."/>
        </authorList>
    </citation>
    <scope>NUCLEOTIDE SEQUENCE [GENOMIC DNA]</scope>
</reference>
<reference key="2">
    <citation type="journal article" date="2001" name="Proc. Natl. Acad. Sci. U.S.A.">
        <title>The complete genome of the crenarchaeon Sulfolobus solfataricus P2.</title>
        <authorList>
            <person name="She Q."/>
            <person name="Singh R.K."/>
            <person name="Confalonieri F."/>
            <person name="Zivanovic Y."/>
            <person name="Allard G."/>
            <person name="Awayez M.J."/>
            <person name="Chan-Weiher C.C.-Y."/>
            <person name="Clausen I.G."/>
            <person name="Curtis B.A."/>
            <person name="De Moors A."/>
            <person name="Erauso G."/>
            <person name="Fletcher C."/>
            <person name="Gordon P.M.K."/>
            <person name="Heikamp-de Jong I."/>
            <person name="Jeffries A.C."/>
            <person name="Kozera C.J."/>
            <person name="Medina N."/>
            <person name="Peng X."/>
            <person name="Thi-Ngoc H.P."/>
            <person name="Redder P."/>
            <person name="Schenk M.E."/>
            <person name="Theriault C."/>
            <person name="Tolstrup N."/>
            <person name="Charlebois R.L."/>
            <person name="Doolittle W.F."/>
            <person name="Duguet M."/>
            <person name="Gaasterland T."/>
            <person name="Garrett R.A."/>
            <person name="Ragan M.A."/>
            <person name="Sensen C.W."/>
            <person name="Van der Oost J."/>
        </authorList>
    </citation>
    <scope>NUCLEOTIDE SEQUENCE [LARGE SCALE GENOMIC DNA]</scope>
    <source>
        <strain>ATCC 35092 / DSM 1617 / JCM 11322 / P2</strain>
    </source>
</reference>
<name>SPT5_SACS2</name>
<organism>
    <name type="scientific">Saccharolobus solfataricus (strain ATCC 35092 / DSM 1617 / JCM 11322 / P2)</name>
    <name type="common">Sulfolobus solfataricus</name>
    <dbReference type="NCBI Taxonomy" id="273057"/>
    <lineage>
        <taxon>Archaea</taxon>
        <taxon>Thermoproteota</taxon>
        <taxon>Thermoprotei</taxon>
        <taxon>Sulfolobales</taxon>
        <taxon>Sulfolobaceae</taxon>
        <taxon>Saccharolobus</taxon>
    </lineage>
</organism>
<comment type="function">
    <text evidence="1">Stimulates transcription elongation.</text>
</comment>
<comment type="subunit">
    <text evidence="1">Heterodimer composed of Spt4 and Spt5. Interacts with RNA polymerase (RNAP).</text>
</comment>
<comment type="similarity">
    <text evidence="1">Belongs to the archaeal Spt5 family.</text>
</comment>
<comment type="sequence caution" evidence="2">
    <conflict type="erroneous initiation">
        <sequence resource="EMBL-CDS" id="AAK40676"/>
    </conflict>
</comment>
<accession>P96036</accession>
<feature type="chain" id="PRO_0000113980" description="Transcription elongation factor Spt5">
    <location>
        <begin position="1"/>
        <end position="152"/>
    </location>
</feature>
<feature type="domain" description="KOW" evidence="1">
    <location>
        <begin position="99"/>
        <end position="128"/>
    </location>
</feature>
<evidence type="ECO:0000255" key="1">
    <source>
        <dbReference type="HAMAP-Rule" id="MF_00950"/>
    </source>
</evidence>
<evidence type="ECO:0000305" key="2"/>
<gene>
    <name evidence="1" type="primary">spt5</name>
    <name type="synonym">nusG</name>
    <name type="ordered locus">SSO0347</name>
</gene>
<protein>
    <recommendedName>
        <fullName evidence="1">Transcription elongation factor Spt5</fullName>
    </recommendedName>
</protein>
<sequence length="152" mass="16671">MEKPNMRNYYAIKVVGGQEINVALMLEERIKTNNIKGIYAIIVPPNLKGYVVLEAEGLHIVKPLIAGIRNARGLAQGLLPRDEILKIVSRKTVGPTVKPGDVVEVISGPFRGTQAQVIRVEEAKGEVVLNILESAFPLQVTVPLDQIKVSKR</sequence>
<proteinExistence type="inferred from homology"/>